<accession>Q6PCB5</accession>
<accession>C9K0P1</accession>
<accession>Q6ZS58</accession>
<accession>Q6ZVI9</accession>
<accession>Q86X48</accession>
<evidence type="ECO:0000250" key="1">
    <source>
        <dbReference type="UniProtKB" id="Q80T69"/>
    </source>
</evidence>
<evidence type="ECO:0000250" key="2">
    <source>
        <dbReference type="UniProtKB" id="Q9GRZ3"/>
    </source>
</evidence>
<evidence type="ECO:0000256" key="3">
    <source>
        <dbReference type="SAM" id="MobiDB-lite"/>
    </source>
</evidence>
<evidence type="ECO:0000303" key="4">
    <source>
    </source>
</evidence>
<evidence type="ECO:0000305" key="5"/>
<evidence type="ECO:0007744" key="6">
    <source>
    </source>
</evidence>
<evidence type="ECO:0007744" key="7">
    <source>
    </source>
</evidence>
<evidence type="ECO:0007744" key="8">
    <source>
    </source>
</evidence>
<evidence type="ECO:0007744" key="9">
    <source>
    </source>
</evidence>
<evidence type="ECO:0007744" key="10">
    <source>
    </source>
</evidence>
<evidence type="ECO:0007744" key="11">
    <source>
    </source>
</evidence>
<evidence type="ECO:0007744" key="12">
    <source>
    </source>
</evidence>
<evidence type="ECO:0007744" key="13">
    <source>
    </source>
</evidence>
<reference key="1">
    <citation type="journal article" date="2004" name="Nat. Genet.">
        <title>Complete sequencing and characterization of 21,243 full-length human cDNAs.</title>
        <authorList>
            <person name="Ota T."/>
            <person name="Suzuki Y."/>
            <person name="Nishikawa T."/>
            <person name="Otsuki T."/>
            <person name="Sugiyama T."/>
            <person name="Irie R."/>
            <person name="Wakamatsu A."/>
            <person name="Hayashi K."/>
            <person name="Sato H."/>
            <person name="Nagai K."/>
            <person name="Kimura K."/>
            <person name="Makita H."/>
            <person name="Sekine M."/>
            <person name="Obayashi M."/>
            <person name="Nishi T."/>
            <person name="Shibahara T."/>
            <person name="Tanaka T."/>
            <person name="Ishii S."/>
            <person name="Yamamoto J."/>
            <person name="Saito K."/>
            <person name="Kawai Y."/>
            <person name="Isono Y."/>
            <person name="Nakamura Y."/>
            <person name="Nagahari K."/>
            <person name="Murakami K."/>
            <person name="Yasuda T."/>
            <person name="Iwayanagi T."/>
            <person name="Wagatsuma M."/>
            <person name="Shiratori A."/>
            <person name="Sudo H."/>
            <person name="Hosoiri T."/>
            <person name="Kaku Y."/>
            <person name="Kodaira H."/>
            <person name="Kondo H."/>
            <person name="Sugawara M."/>
            <person name="Takahashi M."/>
            <person name="Kanda K."/>
            <person name="Yokoi T."/>
            <person name="Furuya T."/>
            <person name="Kikkawa E."/>
            <person name="Omura Y."/>
            <person name="Abe K."/>
            <person name="Kamihara K."/>
            <person name="Katsuta N."/>
            <person name="Sato K."/>
            <person name="Tanikawa M."/>
            <person name="Yamazaki M."/>
            <person name="Ninomiya K."/>
            <person name="Ishibashi T."/>
            <person name="Yamashita H."/>
            <person name="Murakawa K."/>
            <person name="Fujimori K."/>
            <person name="Tanai H."/>
            <person name="Kimata M."/>
            <person name="Watanabe M."/>
            <person name="Hiraoka S."/>
            <person name="Chiba Y."/>
            <person name="Ishida S."/>
            <person name="Ono Y."/>
            <person name="Takiguchi S."/>
            <person name="Watanabe S."/>
            <person name="Yosida M."/>
            <person name="Hotuta T."/>
            <person name="Kusano J."/>
            <person name="Kanehori K."/>
            <person name="Takahashi-Fujii A."/>
            <person name="Hara H."/>
            <person name="Tanase T.-O."/>
            <person name="Nomura Y."/>
            <person name="Togiya S."/>
            <person name="Komai F."/>
            <person name="Hara R."/>
            <person name="Takeuchi K."/>
            <person name="Arita M."/>
            <person name="Imose N."/>
            <person name="Musashino K."/>
            <person name="Yuuki H."/>
            <person name="Oshima A."/>
            <person name="Sasaki N."/>
            <person name="Aotsuka S."/>
            <person name="Yoshikawa Y."/>
            <person name="Matsunawa H."/>
            <person name="Ichihara T."/>
            <person name="Shiohata N."/>
            <person name="Sano S."/>
            <person name="Moriya S."/>
            <person name="Momiyama H."/>
            <person name="Satoh N."/>
            <person name="Takami S."/>
            <person name="Terashima Y."/>
            <person name="Suzuki O."/>
            <person name="Nakagawa S."/>
            <person name="Senoh A."/>
            <person name="Mizoguchi H."/>
            <person name="Goto Y."/>
            <person name="Shimizu F."/>
            <person name="Wakebe H."/>
            <person name="Hishigaki H."/>
            <person name="Watanabe T."/>
            <person name="Sugiyama A."/>
            <person name="Takemoto M."/>
            <person name="Kawakami B."/>
            <person name="Yamazaki M."/>
            <person name="Watanabe K."/>
            <person name="Kumagai A."/>
            <person name="Itakura S."/>
            <person name="Fukuzumi Y."/>
            <person name="Fujimori Y."/>
            <person name="Komiyama M."/>
            <person name="Tashiro H."/>
            <person name="Tanigami A."/>
            <person name="Fujiwara T."/>
            <person name="Ono T."/>
            <person name="Yamada K."/>
            <person name="Fujii Y."/>
            <person name="Ozaki K."/>
            <person name="Hirao M."/>
            <person name="Ohmori Y."/>
            <person name="Kawabata A."/>
            <person name="Hikiji T."/>
            <person name="Kobatake N."/>
            <person name="Inagaki H."/>
            <person name="Ikema Y."/>
            <person name="Okamoto S."/>
            <person name="Okitani R."/>
            <person name="Kawakami T."/>
            <person name="Noguchi S."/>
            <person name="Itoh T."/>
            <person name="Shigeta K."/>
            <person name="Senba T."/>
            <person name="Matsumura K."/>
            <person name="Nakajima Y."/>
            <person name="Mizuno T."/>
            <person name="Morinaga M."/>
            <person name="Sasaki M."/>
            <person name="Togashi T."/>
            <person name="Oyama M."/>
            <person name="Hata H."/>
            <person name="Watanabe M."/>
            <person name="Komatsu T."/>
            <person name="Mizushima-Sugano J."/>
            <person name="Satoh T."/>
            <person name="Shirai Y."/>
            <person name="Takahashi Y."/>
            <person name="Nakagawa K."/>
            <person name="Okumura K."/>
            <person name="Nagase T."/>
            <person name="Nomura N."/>
            <person name="Kikuchi H."/>
            <person name="Masuho Y."/>
            <person name="Yamashita R."/>
            <person name="Nakai K."/>
            <person name="Yada T."/>
            <person name="Nakamura Y."/>
            <person name="Ohara O."/>
            <person name="Isogai T."/>
            <person name="Sugano S."/>
        </authorList>
    </citation>
    <scope>NUCLEOTIDE SEQUENCE [LARGE SCALE MRNA] (ISOFORM 2)</scope>
    <source>
        <tissue>Cerebellum</tissue>
    </source>
</reference>
<reference key="2">
    <citation type="journal article" date="2003" name="Nature">
        <title>The DNA sequence of human chromosome 7.</title>
        <authorList>
            <person name="Hillier L.W."/>
            <person name="Fulton R.S."/>
            <person name="Fulton L.A."/>
            <person name="Graves T.A."/>
            <person name="Pepin K.H."/>
            <person name="Wagner-McPherson C."/>
            <person name="Layman D."/>
            <person name="Maas J."/>
            <person name="Jaeger S."/>
            <person name="Walker R."/>
            <person name="Wylie K."/>
            <person name="Sekhon M."/>
            <person name="Becker M.C."/>
            <person name="O'Laughlin M.D."/>
            <person name="Schaller M.E."/>
            <person name="Fewell G.A."/>
            <person name="Delehaunty K.D."/>
            <person name="Miner T.L."/>
            <person name="Nash W.E."/>
            <person name="Cordes M."/>
            <person name="Du H."/>
            <person name="Sun H."/>
            <person name="Edwards J."/>
            <person name="Bradshaw-Cordum H."/>
            <person name="Ali J."/>
            <person name="Andrews S."/>
            <person name="Isak A."/>
            <person name="Vanbrunt A."/>
            <person name="Nguyen C."/>
            <person name="Du F."/>
            <person name="Lamar B."/>
            <person name="Courtney L."/>
            <person name="Kalicki J."/>
            <person name="Ozersky P."/>
            <person name="Bielicki L."/>
            <person name="Scott K."/>
            <person name="Holmes A."/>
            <person name="Harkins R."/>
            <person name="Harris A."/>
            <person name="Strong C.M."/>
            <person name="Hou S."/>
            <person name="Tomlinson C."/>
            <person name="Dauphin-Kohlberg S."/>
            <person name="Kozlowicz-Reilly A."/>
            <person name="Leonard S."/>
            <person name="Rohlfing T."/>
            <person name="Rock S.M."/>
            <person name="Tin-Wollam A.-M."/>
            <person name="Abbott A."/>
            <person name="Minx P."/>
            <person name="Maupin R."/>
            <person name="Strowmatt C."/>
            <person name="Latreille P."/>
            <person name="Miller N."/>
            <person name="Johnson D."/>
            <person name="Murray J."/>
            <person name="Woessner J.P."/>
            <person name="Wendl M.C."/>
            <person name="Yang S.-P."/>
            <person name="Schultz B.R."/>
            <person name="Wallis J.W."/>
            <person name="Spieth J."/>
            <person name="Bieri T.A."/>
            <person name="Nelson J.O."/>
            <person name="Berkowicz N."/>
            <person name="Wohldmann P.E."/>
            <person name="Cook L.L."/>
            <person name="Hickenbotham M.T."/>
            <person name="Eldred J."/>
            <person name="Williams D."/>
            <person name="Bedell J.A."/>
            <person name="Mardis E.R."/>
            <person name="Clifton S.W."/>
            <person name="Chissoe S.L."/>
            <person name="Marra M.A."/>
            <person name="Raymond C."/>
            <person name="Haugen E."/>
            <person name="Gillett W."/>
            <person name="Zhou Y."/>
            <person name="James R."/>
            <person name="Phelps K."/>
            <person name="Iadanoto S."/>
            <person name="Bubb K."/>
            <person name="Simms E."/>
            <person name="Levy R."/>
            <person name="Clendenning J."/>
            <person name="Kaul R."/>
            <person name="Kent W.J."/>
            <person name="Furey T.S."/>
            <person name="Baertsch R.A."/>
            <person name="Brent M.R."/>
            <person name="Keibler E."/>
            <person name="Flicek P."/>
            <person name="Bork P."/>
            <person name="Suyama M."/>
            <person name="Bailey J.A."/>
            <person name="Portnoy M.E."/>
            <person name="Torrents D."/>
            <person name="Chinwalla A.T."/>
            <person name="Gish W.R."/>
            <person name="Eddy S.R."/>
            <person name="McPherson J.D."/>
            <person name="Olson M.V."/>
            <person name="Eichler E.E."/>
            <person name="Green E.D."/>
            <person name="Waterston R.H."/>
            <person name="Wilson R.K."/>
        </authorList>
    </citation>
    <scope>NUCLEOTIDE SEQUENCE [LARGE SCALE GENOMIC DNA]</scope>
</reference>
<reference key="3">
    <citation type="journal article" date="2003" name="Science">
        <title>Human chromosome 7: DNA sequence and biology.</title>
        <authorList>
            <person name="Scherer S.W."/>
            <person name="Cheung J."/>
            <person name="MacDonald J.R."/>
            <person name="Osborne L.R."/>
            <person name="Nakabayashi K."/>
            <person name="Herbrick J.-A."/>
            <person name="Carson A.R."/>
            <person name="Parker-Katiraee L."/>
            <person name="Skaug J."/>
            <person name="Khaja R."/>
            <person name="Zhang J."/>
            <person name="Hudek A.K."/>
            <person name="Li M."/>
            <person name="Haddad M."/>
            <person name="Duggan G.E."/>
            <person name="Fernandez B.A."/>
            <person name="Kanematsu E."/>
            <person name="Gentles S."/>
            <person name="Christopoulos C.C."/>
            <person name="Choufani S."/>
            <person name="Kwasnicka D."/>
            <person name="Zheng X.H."/>
            <person name="Lai Z."/>
            <person name="Nusskern D.R."/>
            <person name="Zhang Q."/>
            <person name="Gu Z."/>
            <person name="Lu F."/>
            <person name="Zeesman S."/>
            <person name="Nowaczyk M.J."/>
            <person name="Teshima I."/>
            <person name="Chitayat D."/>
            <person name="Shuman C."/>
            <person name="Weksberg R."/>
            <person name="Zackai E.H."/>
            <person name="Grebe T.A."/>
            <person name="Cox S.R."/>
            <person name="Kirkpatrick S.J."/>
            <person name="Rahman N."/>
            <person name="Friedman J.M."/>
            <person name="Heng H.H.Q."/>
            <person name="Pelicci P.G."/>
            <person name="Lo-Coco F."/>
            <person name="Belloni E."/>
            <person name="Shaffer L.G."/>
            <person name="Pober B."/>
            <person name="Morton C.C."/>
            <person name="Gusella J.F."/>
            <person name="Bruns G.A.P."/>
            <person name="Korf B.R."/>
            <person name="Quade B.J."/>
            <person name="Ligon A.H."/>
            <person name="Ferguson H."/>
            <person name="Higgins A.W."/>
            <person name="Leach N.T."/>
            <person name="Herrick S.R."/>
            <person name="Lemyre E."/>
            <person name="Farra C.G."/>
            <person name="Kim H.-G."/>
            <person name="Summers A.M."/>
            <person name="Gripp K.W."/>
            <person name="Roberts W."/>
            <person name="Szatmari P."/>
            <person name="Winsor E.J.T."/>
            <person name="Grzeschik K.-H."/>
            <person name="Teebi A."/>
            <person name="Minassian B.A."/>
            <person name="Kere J."/>
            <person name="Armengol L."/>
            <person name="Pujana M.A."/>
            <person name="Estivill X."/>
            <person name="Wilson M.D."/>
            <person name="Koop B.F."/>
            <person name="Tosi S."/>
            <person name="Moore G.E."/>
            <person name="Boright A.P."/>
            <person name="Zlotorynski E."/>
            <person name="Kerem B."/>
            <person name="Kroisel P.M."/>
            <person name="Petek E."/>
            <person name="Oscier D.G."/>
            <person name="Mould S.J."/>
            <person name="Doehner H."/>
            <person name="Doehner K."/>
            <person name="Rommens J.M."/>
            <person name="Vincent J.B."/>
            <person name="Venter J.C."/>
            <person name="Li P.W."/>
            <person name="Mural R.J."/>
            <person name="Adams M.D."/>
            <person name="Tsui L.-C."/>
        </authorList>
    </citation>
    <scope>NUCLEOTIDE SEQUENCE [LARGE SCALE GENOMIC DNA]</scope>
</reference>
<reference key="4">
    <citation type="journal article" date="2004" name="Genome Res.">
        <title>The status, quality, and expansion of the NIH full-length cDNA project: the Mammalian Gene Collection (MGC).</title>
        <authorList>
            <consortium name="The MGC Project Team"/>
        </authorList>
    </citation>
    <scope>NUCLEOTIDE SEQUENCE [LARGE SCALE MRNA] (ISOFORM 1)</scope>
    <source>
        <tissue>Eye</tissue>
        <tissue>Placenta</tissue>
    </source>
</reference>
<reference key="5">
    <citation type="journal article" date="2009" name="Anal. Chem.">
        <title>Lys-N and trypsin cover complementary parts of the phosphoproteome in a refined SCX-based approach.</title>
        <authorList>
            <person name="Gauci S."/>
            <person name="Helbig A.O."/>
            <person name="Slijper M."/>
            <person name="Krijgsveld J."/>
            <person name="Heck A.J."/>
            <person name="Mohammed S."/>
        </authorList>
    </citation>
    <scope>ACETYLATION [LARGE SCALE ANALYSIS] AT ALA-2</scope>
    <scope>CLEAVAGE OF INITIATOR METHIONINE [LARGE SCALE ANALYSIS]</scope>
    <scope>IDENTIFICATION BY MASS SPECTROMETRY [LARGE SCALE ANALYSIS]</scope>
</reference>
<reference key="6">
    <citation type="journal article" date="2009" name="Sci. Signal.">
        <title>Quantitative phosphoproteomic analysis of T cell receptor signaling reveals system-wide modulation of protein-protein interactions.</title>
        <authorList>
            <person name="Mayya V."/>
            <person name="Lundgren D.H."/>
            <person name="Hwang S.-I."/>
            <person name="Rezaul K."/>
            <person name="Wu L."/>
            <person name="Eng J.K."/>
            <person name="Rodionov V."/>
            <person name="Han D.K."/>
        </authorList>
    </citation>
    <scope>IDENTIFICATION BY MASS SPECTROMETRY [LARGE SCALE ANALYSIS]</scope>
    <source>
        <tissue>Leukemic T-cell</tissue>
    </source>
</reference>
<reference key="7">
    <citation type="journal article" date="2009" name="Science">
        <title>Lysine acetylation targets protein complexes and co-regulates major cellular functions.</title>
        <authorList>
            <person name="Choudhary C."/>
            <person name="Kumar C."/>
            <person name="Gnad F."/>
            <person name="Nielsen M.L."/>
            <person name="Rehman M."/>
            <person name="Walther T.C."/>
            <person name="Olsen J.V."/>
            <person name="Mann M."/>
        </authorList>
    </citation>
    <scope>ACETYLATION [LARGE SCALE ANALYSIS] AT LYS-28</scope>
    <scope>IDENTIFICATION BY MASS SPECTROMETRY [LARGE SCALE ANALYSIS]</scope>
</reference>
<reference key="8">
    <citation type="journal article" date="2011" name="BMC Syst. Biol.">
        <title>Initial characterization of the human central proteome.</title>
        <authorList>
            <person name="Burkard T.R."/>
            <person name="Planyavsky M."/>
            <person name="Kaupe I."/>
            <person name="Breitwieser F.P."/>
            <person name="Buerckstuemmer T."/>
            <person name="Bennett K.L."/>
            <person name="Superti-Furga G."/>
            <person name="Colinge J."/>
        </authorList>
    </citation>
    <scope>IDENTIFICATION BY MASS SPECTROMETRY [LARGE SCALE ANALYSIS]</scope>
</reference>
<reference key="9">
    <citation type="journal article" date="2013" name="J. Proteome Res.">
        <title>Toward a comprehensive characterization of a human cancer cell phosphoproteome.</title>
        <authorList>
            <person name="Zhou H."/>
            <person name="Di Palma S."/>
            <person name="Preisinger C."/>
            <person name="Peng M."/>
            <person name="Polat A.N."/>
            <person name="Heck A.J."/>
            <person name="Mohammed S."/>
        </authorList>
    </citation>
    <scope>PHOSPHORYLATION [LARGE SCALE ANALYSIS] AT SER-6; SER-32 AND SER-315</scope>
    <scope>IDENTIFICATION BY MASS SPECTROMETRY [LARGE SCALE ANALYSIS]</scope>
    <source>
        <tissue>Cervix carcinoma</tissue>
        <tissue>Erythroleukemia</tissue>
    </source>
</reference>
<reference key="10">
    <citation type="journal article" date="2014" name="Nat. Struct. Mol. Biol.">
        <title>Uncovering global SUMOylation signaling networks in a site-specific manner.</title>
        <authorList>
            <person name="Hendriks I.A."/>
            <person name="D'Souza R.C."/>
            <person name="Yang B."/>
            <person name="Verlaan-de Vries M."/>
            <person name="Mann M."/>
            <person name="Vertegaal A.C."/>
        </authorList>
    </citation>
    <scope>SUMOYLATION [LARGE SCALE ANALYSIS] AT LYS-763</scope>
    <scope>IDENTIFICATION BY MASS SPECTROMETRY [LARGE SCALE ANALYSIS]</scope>
</reference>
<reference key="11">
    <citation type="journal article" date="2014" name="Proc. Natl. Acad. Sci. U.S.A.">
        <title>Mapping of SUMO sites and analysis of SUMOylation changes induced by external stimuli.</title>
        <authorList>
            <person name="Impens F."/>
            <person name="Radoshevich L."/>
            <person name="Cossart P."/>
            <person name="Ribet D."/>
        </authorList>
    </citation>
    <scope>SUMOYLATION [LARGE SCALE ANALYSIS] AT LYS-763</scope>
    <scope>IDENTIFICATION BY MASS SPECTROMETRY [LARGE SCALE ANALYSIS]</scope>
</reference>
<reference key="12">
    <citation type="journal article" date="2015" name="Cell Rep.">
        <title>SUMO-2 orchestrates chromatin modifiers in response to DNA damage.</title>
        <authorList>
            <person name="Hendriks I.A."/>
            <person name="Treffers L.W."/>
            <person name="Verlaan-de Vries M."/>
            <person name="Olsen J.V."/>
            <person name="Vertegaal A.C."/>
        </authorList>
    </citation>
    <scope>SUMOYLATION [LARGE SCALE ANALYSIS] AT LYS-763 AND LYS-814</scope>
    <scope>IDENTIFICATION BY MASS SPECTROMETRY [LARGE SCALE ANALYSIS]</scope>
</reference>
<reference key="13">
    <citation type="journal article" date="2015" name="Mol. Cell. Proteomics">
        <title>System-wide analysis of SUMOylation dynamics in response to replication stress reveals novel small ubiquitin-like modified target proteins and acceptor lysines relevant for genome stability.</title>
        <authorList>
            <person name="Xiao Z."/>
            <person name="Chang J.G."/>
            <person name="Hendriks I.A."/>
            <person name="Sigurdsson J.O."/>
            <person name="Olsen J.V."/>
            <person name="Vertegaal A.C."/>
        </authorList>
    </citation>
    <scope>SUMOYLATION [LARGE SCALE ANALYSIS] AT LYS-753</scope>
    <scope>IDENTIFICATION BY MASS SPECTROMETRY [LARGE SCALE ANALYSIS]</scope>
</reference>
<reference key="14">
    <citation type="journal article" date="2017" name="Nat. Struct. Mol. Biol.">
        <title>Site-specific mapping of the human SUMO proteome reveals co-modification with phosphorylation.</title>
        <authorList>
            <person name="Hendriks I.A."/>
            <person name="Lyon D."/>
            <person name="Young C."/>
            <person name="Jensen L.J."/>
            <person name="Vertegaal A.C."/>
            <person name="Nielsen M.L."/>
        </authorList>
    </citation>
    <scope>SUMOYLATION [LARGE SCALE ANALYSIS] AT LYS-223; LYS-548; LYS-753; LYS-763 AND LYS-814</scope>
    <scope>IDENTIFICATION BY MASS SPECTROMETRY [LARGE SCALE ANALYSIS]</scope>
</reference>
<dbReference type="EC" id="1.14.11.-" evidence="1"/>
<dbReference type="EMBL" id="AK124517">
    <property type="protein sequence ID" value="BAC85872.1"/>
    <property type="status" value="ALT_INIT"/>
    <property type="molecule type" value="mRNA"/>
</dbReference>
<dbReference type="EMBL" id="AK127713">
    <property type="protein sequence ID" value="BAC87096.1"/>
    <property type="molecule type" value="mRNA"/>
</dbReference>
<dbReference type="EMBL" id="AC004955">
    <property type="status" value="NOT_ANNOTATED_CDS"/>
    <property type="molecule type" value="Genomic_DNA"/>
</dbReference>
<dbReference type="EMBL" id="CH236949">
    <property type="protein sequence ID" value="EAL24197.1"/>
    <property type="molecule type" value="Genomic_DNA"/>
</dbReference>
<dbReference type="EMBL" id="BC046353">
    <property type="protein sequence ID" value="AAH46353.1"/>
    <property type="status" value="ALT_SEQ"/>
    <property type="molecule type" value="mRNA"/>
</dbReference>
<dbReference type="EMBL" id="BC059402">
    <property type="protein sequence ID" value="AAH59402.1"/>
    <property type="molecule type" value="mRNA"/>
</dbReference>
<dbReference type="CCDS" id="CCDS43607.1">
    <molecule id="Q6PCB5-1"/>
</dbReference>
<dbReference type="RefSeq" id="NP_940869.2">
    <molecule id="Q6PCB5-1"/>
    <property type="nucleotide sequence ID" value="NM_198467.3"/>
</dbReference>
<dbReference type="SMR" id="Q6PCB5"/>
<dbReference type="BioGRID" id="128788">
    <property type="interactions" value="135"/>
</dbReference>
<dbReference type="FunCoup" id="Q6PCB5">
    <property type="interactions" value="2546"/>
</dbReference>
<dbReference type="IntAct" id="Q6PCB5">
    <property type="interactions" value="72"/>
</dbReference>
<dbReference type="MINT" id="Q6PCB5"/>
<dbReference type="STRING" id="9606.ENSP00000334040"/>
<dbReference type="GlyCosmos" id="Q6PCB5">
    <property type="glycosylation" value="7 sites, 1 glycan"/>
</dbReference>
<dbReference type="GlyGen" id="Q6PCB5">
    <property type="glycosylation" value="9 sites, 1 O-linked glycan (9 sites)"/>
</dbReference>
<dbReference type="iPTMnet" id="Q6PCB5"/>
<dbReference type="PhosphoSitePlus" id="Q6PCB5"/>
<dbReference type="BioMuta" id="RSBN1L"/>
<dbReference type="DMDM" id="313104176"/>
<dbReference type="jPOST" id="Q6PCB5"/>
<dbReference type="MassIVE" id="Q6PCB5"/>
<dbReference type="PaxDb" id="9606-ENSP00000334040"/>
<dbReference type="PeptideAtlas" id="Q6PCB5"/>
<dbReference type="ProteomicsDB" id="67056">
    <molecule id="Q6PCB5-1"/>
</dbReference>
<dbReference type="ProteomicsDB" id="67057">
    <molecule id="Q6PCB5-2"/>
</dbReference>
<dbReference type="Pumba" id="Q6PCB5"/>
<dbReference type="Antibodypedia" id="8364">
    <property type="antibodies" value="23 antibodies from 8 providers"/>
</dbReference>
<dbReference type="DNASU" id="222194"/>
<dbReference type="Ensembl" id="ENST00000334955.13">
    <molecule id="Q6PCB5-1"/>
    <property type="protein sequence ID" value="ENSP00000334040.7"/>
    <property type="gene ID" value="ENSG00000187257.16"/>
</dbReference>
<dbReference type="Ensembl" id="ENST00000445288.5">
    <molecule id="Q6PCB5-2"/>
    <property type="protein sequence ID" value="ENSP00000393888.1"/>
    <property type="gene ID" value="ENSG00000187257.16"/>
</dbReference>
<dbReference type="GeneID" id="222194"/>
<dbReference type="KEGG" id="hsa:222194"/>
<dbReference type="MANE-Select" id="ENST00000334955.13">
    <property type="protein sequence ID" value="ENSP00000334040.7"/>
    <property type="RefSeq nucleotide sequence ID" value="NM_198467.3"/>
    <property type="RefSeq protein sequence ID" value="NP_940869.2"/>
</dbReference>
<dbReference type="UCSC" id="uc010ldt.2">
    <molecule id="Q6PCB5-1"/>
    <property type="organism name" value="human"/>
</dbReference>
<dbReference type="AGR" id="HGNC:24765"/>
<dbReference type="CTD" id="222194"/>
<dbReference type="DisGeNET" id="222194"/>
<dbReference type="GeneCards" id="RSBN1L"/>
<dbReference type="HGNC" id="HGNC:24765">
    <property type="gene designation" value="RSBN1L"/>
</dbReference>
<dbReference type="HPA" id="ENSG00000187257">
    <property type="expression patterns" value="Low tissue specificity"/>
</dbReference>
<dbReference type="neXtProt" id="NX_Q6PCB5"/>
<dbReference type="OpenTargets" id="ENSG00000187257"/>
<dbReference type="PharmGKB" id="PA134948776"/>
<dbReference type="VEuPathDB" id="HostDB:ENSG00000187257"/>
<dbReference type="eggNOG" id="KOG4425">
    <property type="taxonomic scope" value="Eukaryota"/>
</dbReference>
<dbReference type="GeneTree" id="ENSGT00390000001969"/>
<dbReference type="HOGENOM" id="CLU_009952_0_1_1"/>
<dbReference type="InParanoid" id="Q6PCB5"/>
<dbReference type="OMA" id="WPAQPRI"/>
<dbReference type="OrthoDB" id="6020087at2759"/>
<dbReference type="PAN-GO" id="Q6PCB5">
    <property type="GO annotations" value="1 GO annotation based on evolutionary models"/>
</dbReference>
<dbReference type="PhylomeDB" id="Q6PCB5"/>
<dbReference type="TreeFam" id="TF323256"/>
<dbReference type="PathwayCommons" id="Q6PCB5"/>
<dbReference type="SignaLink" id="Q6PCB5"/>
<dbReference type="BioGRID-ORCS" id="222194">
    <property type="hits" value="43 hits in 1165 CRISPR screens"/>
</dbReference>
<dbReference type="ChiTaRS" id="RSBN1L">
    <property type="organism name" value="human"/>
</dbReference>
<dbReference type="GenomeRNAi" id="222194"/>
<dbReference type="Pharos" id="Q6PCB5">
    <property type="development level" value="Tdark"/>
</dbReference>
<dbReference type="PRO" id="PR:Q6PCB5"/>
<dbReference type="Proteomes" id="UP000005640">
    <property type="component" value="Chromosome 7"/>
</dbReference>
<dbReference type="RNAct" id="Q6PCB5">
    <property type="molecule type" value="protein"/>
</dbReference>
<dbReference type="Bgee" id="ENSG00000187257">
    <property type="expression patterns" value="Expressed in tendon of biceps brachii and 195 other cell types or tissues"/>
</dbReference>
<dbReference type="ExpressionAtlas" id="Q6PCB5">
    <property type="expression patterns" value="baseline and differential"/>
</dbReference>
<dbReference type="GO" id="GO:0005634">
    <property type="term" value="C:nucleus"/>
    <property type="evidence" value="ECO:0000318"/>
    <property type="project" value="GO_Central"/>
</dbReference>
<dbReference type="GO" id="GO:0051213">
    <property type="term" value="F:dioxygenase activity"/>
    <property type="evidence" value="ECO:0007669"/>
    <property type="project" value="UniProtKB-KW"/>
</dbReference>
<dbReference type="GO" id="GO:0046872">
    <property type="term" value="F:metal ion binding"/>
    <property type="evidence" value="ECO:0007669"/>
    <property type="project" value="UniProtKB-KW"/>
</dbReference>
<dbReference type="InterPro" id="IPR026306">
    <property type="entry name" value="RSBN1/Dpy-21"/>
</dbReference>
<dbReference type="PANTHER" id="PTHR13354:SF9">
    <property type="entry name" value="LYSINE-SPECIFIC DEMETHYLASE RSBN1L"/>
    <property type="match status" value="1"/>
</dbReference>
<dbReference type="PANTHER" id="PTHR13354">
    <property type="entry name" value="ROUND SPERMATID BASIC PROTEIN 1"/>
    <property type="match status" value="1"/>
</dbReference>
<protein>
    <recommendedName>
        <fullName evidence="5">Lysine-specific demethylase RSBN1L</fullName>
        <ecNumber evidence="1">1.14.11.-</ecNumber>
    </recommendedName>
    <alternativeName>
        <fullName>Round spermatid basic protein 1-like protein</fullName>
    </alternativeName>
</protein>
<feature type="initiator methionine" description="Removed" evidence="6">
    <location>
        <position position="1"/>
    </location>
</feature>
<feature type="chain" id="PRO_0000299414" description="Lysine-specific demethylase RSBN1L">
    <location>
        <begin position="2"/>
        <end position="846"/>
    </location>
</feature>
<feature type="region of interest" description="Disordered" evidence="3">
    <location>
        <begin position="15"/>
        <end position="124"/>
    </location>
</feature>
<feature type="region of interest" description="Disordered" evidence="3">
    <location>
        <begin position="145"/>
        <end position="222"/>
    </location>
</feature>
<feature type="region of interest" description="Disordered" evidence="3">
    <location>
        <begin position="242"/>
        <end position="272"/>
    </location>
</feature>
<feature type="region of interest" description="Disordered" evidence="3">
    <location>
        <begin position="697"/>
        <end position="719"/>
    </location>
</feature>
<feature type="region of interest" description="Disordered" evidence="3">
    <location>
        <begin position="827"/>
        <end position="846"/>
    </location>
</feature>
<feature type="compositionally biased region" description="Low complexity" evidence="3">
    <location>
        <begin position="66"/>
        <end position="108"/>
    </location>
</feature>
<feature type="compositionally biased region" description="Polar residues" evidence="3">
    <location>
        <begin position="112"/>
        <end position="122"/>
    </location>
</feature>
<feature type="compositionally biased region" description="Low complexity" evidence="3">
    <location>
        <begin position="145"/>
        <end position="155"/>
    </location>
</feature>
<feature type="compositionally biased region" description="Basic residues" evidence="3">
    <location>
        <begin position="156"/>
        <end position="172"/>
    </location>
</feature>
<feature type="compositionally biased region" description="Basic and acidic residues" evidence="3">
    <location>
        <begin position="183"/>
        <end position="211"/>
    </location>
</feature>
<feature type="compositionally biased region" description="Basic residues" evidence="3">
    <location>
        <begin position="250"/>
        <end position="271"/>
    </location>
</feature>
<feature type="compositionally biased region" description="Polar residues" evidence="3">
    <location>
        <begin position="700"/>
        <end position="718"/>
    </location>
</feature>
<feature type="compositionally biased region" description="Basic and acidic residues" evidence="3">
    <location>
        <begin position="836"/>
        <end position="846"/>
    </location>
</feature>
<feature type="binding site" evidence="2">
    <location>
        <position position="568"/>
    </location>
    <ligand>
        <name>2-oxoglutarate</name>
        <dbReference type="ChEBI" id="CHEBI:16810"/>
    </ligand>
</feature>
<feature type="binding site" evidence="2">
    <location>
        <position position="571"/>
    </location>
    <ligand>
        <name>Fe cation</name>
        <dbReference type="ChEBI" id="CHEBI:24875"/>
        <note>catalytic</note>
    </ligand>
</feature>
<feature type="binding site" evidence="2">
    <location>
        <position position="573"/>
    </location>
    <ligand>
        <name>Fe cation</name>
        <dbReference type="ChEBI" id="CHEBI:24875"/>
        <note>catalytic</note>
    </ligand>
</feature>
<feature type="binding site" evidence="2">
    <location>
        <position position="665"/>
    </location>
    <ligand>
        <name>2-oxoglutarate</name>
        <dbReference type="ChEBI" id="CHEBI:16810"/>
    </ligand>
</feature>
<feature type="binding site" evidence="2">
    <location>
        <position position="673"/>
    </location>
    <ligand>
        <name>Fe cation</name>
        <dbReference type="ChEBI" id="CHEBI:24875"/>
        <note>catalytic</note>
    </ligand>
</feature>
<feature type="modified residue" description="N-acetylalanine" evidence="6">
    <location>
        <position position="2"/>
    </location>
</feature>
<feature type="modified residue" description="Phosphoserine" evidence="8">
    <location>
        <position position="6"/>
    </location>
</feature>
<feature type="modified residue" description="N6-acetyllysine" evidence="7">
    <location>
        <position position="28"/>
    </location>
</feature>
<feature type="modified residue" description="Phosphoserine" evidence="8">
    <location>
        <position position="32"/>
    </location>
</feature>
<feature type="modified residue" description="Phosphoserine" evidence="8">
    <location>
        <position position="315"/>
    </location>
</feature>
<feature type="cross-link" description="Glycyl lysine isopeptide (Lys-Gly) (interchain with G-Cter in SUMO2)" evidence="13">
    <location>
        <position position="223"/>
    </location>
</feature>
<feature type="cross-link" description="Glycyl lysine isopeptide (Lys-Gly) (interchain with G-Cter in SUMO2)" evidence="13">
    <location>
        <position position="548"/>
    </location>
</feature>
<feature type="cross-link" description="Glycyl lysine isopeptide (Lys-Gly) (interchain with G-Cter in SUMO2)" evidence="11 13">
    <location>
        <position position="753"/>
    </location>
</feature>
<feature type="cross-link" description="Glycyl lysine isopeptide (Lys-Gly) (interchain with G-Cter in SUMO2)" evidence="9 10 12 13">
    <location>
        <position position="763"/>
    </location>
</feature>
<feature type="cross-link" description="Glycyl lysine isopeptide (Lys-Gly) (interchain with G-Cter in SUMO2)" evidence="12 13">
    <location>
        <position position="814"/>
    </location>
</feature>
<feature type="splice variant" id="VSP_027658" description="In isoform 2." evidence="4">
    <location>
        <begin position="1"/>
        <end position="270"/>
    </location>
</feature>
<feature type="sequence conflict" description="In Ref. 4; AAH46353." evidence="5" ref="4">
    <original>G</original>
    <variation>V</variation>
    <location>
        <position position="38"/>
    </location>
</feature>
<feature type="sequence conflict" description="In Ref. 4; AAH46353." evidence="5" ref="4">
    <original>H</original>
    <variation>K</variation>
    <location>
        <position position="216"/>
    </location>
</feature>
<feature type="sequence conflict" description="In Ref. 1; BAC87096." evidence="5" ref="1">
    <original>M</original>
    <variation>V</variation>
    <location>
        <position position="375"/>
    </location>
</feature>
<feature type="sequence conflict" description="In Ref. 3; EAL24197 and 4; AAH59402." evidence="5" ref="3 4">
    <location>
        <begin position="428"/>
        <end position="431"/>
    </location>
</feature>
<feature type="sequence conflict" description="In Ref. 1; BAC85872." evidence="5" ref="1">
    <original>N</original>
    <variation>S</variation>
    <location>
        <position position="808"/>
    </location>
</feature>
<keyword id="KW-0007">Acetylation</keyword>
<keyword id="KW-0025">Alternative splicing</keyword>
<keyword id="KW-0223">Dioxygenase</keyword>
<keyword id="KW-0408">Iron</keyword>
<keyword id="KW-1017">Isopeptide bond</keyword>
<keyword id="KW-0479">Metal-binding</keyword>
<keyword id="KW-0539">Nucleus</keyword>
<keyword id="KW-0560">Oxidoreductase</keyword>
<keyword id="KW-0597">Phosphoprotein</keyword>
<keyword id="KW-1267">Proteomics identification</keyword>
<keyword id="KW-1185">Reference proteome</keyword>
<keyword id="KW-0832">Ubl conjugation</keyword>
<name>RSBNL_HUMAN</name>
<proteinExistence type="evidence at protein level"/>
<comment type="function">
    <text evidence="1">Lysine-specific demethylase that specifically demethylates methylated lysine residues of proteins.</text>
</comment>
<comment type="cofactor">
    <cofactor evidence="1">
        <name>Fe(2+)</name>
        <dbReference type="ChEBI" id="CHEBI:29033"/>
    </cofactor>
    <text evidence="2">Binds 1 Fe(2+) ion per subunit.</text>
</comment>
<comment type="subcellular location">
    <subcellularLocation>
        <location evidence="2">Nucleus</location>
    </subcellularLocation>
</comment>
<comment type="alternative products">
    <event type="alternative splicing"/>
    <isoform>
        <id>Q6PCB5-1</id>
        <name>1</name>
        <sequence type="displayed"/>
    </isoform>
    <isoform>
        <id>Q6PCB5-2</id>
        <name>2</name>
        <sequence type="described" ref="VSP_027658"/>
    </isoform>
</comment>
<comment type="similarity">
    <text evidence="5">Belongs to the round spermatid basic protein 1 family.</text>
</comment>
<comment type="sequence caution" evidence="5">
    <conflict type="miscellaneous discrepancy">
        <sequence resource="EMBL-CDS" id="AAH46353"/>
    </conflict>
    <text>Contaminating sequence. Potential poly-A sequence.</text>
</comment>
<comment type="sequence caution" evidence="5">
    <conflict type="erroneous initiation">
        <sequence resource="EMBL-CDS" id="BAC85872"/>
    </conflict>
    <text>Truncated N-terminus.</text>
</comment>
<gene>
    <name type="primary">RSBN1L</name>
</gene>
<sequence length="846" mass="94870">MAEPPSPVHCVAAAAPTATVSEKEPFGKLQLSSRDPPGSLSAKKVRTEEKKAPRRVNGEGGSGGNSRQLQPPAAPSPQSYGSPASWSFAPLSAAPSPSSSRSSFSFSAGTAVPSSASASLSQPVPRKLLVPPTLLHAQPHHLLLPAAAAAASANAKSRRPKEKREKERRRHGLGGAREAGGASREENGEVKPLPRDKIKDKIKERDKEKEREKKKHKVMNEIKKENGEVKILLKSGKEKPKTNIEDLQIKKVKKKKKKKHKENEKRKRPKMYSKSIQTICSGLLTDVEDQAAKGILNDNIKDYVGKNLDTKNYDSKIPENSEFPFVSLKEPRVQNNLKRLDTLEFKQLIHIEHQPNGGASVIHAYSNELSHLSPMEMERFAEEFVGLVFSENENSAAFYVMGIVHGAATYLPDFLDYFSFNFPNSPVKMEILGKKDIETTTMSNFHAQVKRTYSHGTYRAGPMRQISLVGAVDEEVGDYFPEFLDMLEESPFLKCTLPWGTLSSLKLQSRKDSDDGPIMWVRPGEQMIPVADMPKSPFKRKRTTNEIKNLQYLPRTSEPREMLFEDRTRAHADHIGQGFERQTTAAVGVLKAVHCGEWPDQPRITKDVICFHAEDFLEVVQRMQLDLHEPPLSQCVQWVDDAKLNQLRREGIRYARIQLYDNDIYFIPRNVVHQFKTVSAVCSLAWHIRLKLYHSEEDTSQNTATHETGTSSDSTSSVLGPHTDNMICAVSKASLDSVFSDKLHSKYELQQIKHEPIASVRIKEEPVNVNIPEKTTALNNMDGKNVKAKLDHVQFAEFKIDMDSKFENSNKDLKEELCPGNLSLVDTRQHSSAHSNQDKKDDDILC</sequence>
<organism>
    <name type="scientific">Homo sapiens</name>
    <name type="common">Human</name>
    <dbReference type="NCBI Taxonomy" id="9606"/>
    <lineage>
        <taxon>Eukaryota</taxon>
        <taxon>Metazoa</taxon>
        <taxon>Chordata</taxon>
        <taxon>Craniata</taxon>
        <taxon>Vertebrata</taxon>
        <taxon>Euteleostomi</taxon>
        <taxon>Mammalia</taxon>
        <taxon>Eutheria</taxon>
        <taxon>Euarchontoglires</taxon>
        <taxon>Primates</taxon>
        <taxon>Haplorrhini</taxon>
        <taxon>Catarrhini</taxon>
        <taxon>Hominidae</taxon>
        <taxon>Homo</taxon>
    </lineage>
</organism>